<evidence type="ECO:0000255" key="1">
    <source>
        <dbReference type="HAMAP-Rule" id="MF_00017"/>
    </source>
</evidence>
<sequence length="203" mass="22119">MFEGPVQDLIDELGKLPGIGPKSAQRIAFHLLSVEPSDIDRLTGVLAKVRDGVRFCAVCGNVSDNERCRICSDIRRDASVVCIVEEPKDIQAVERTREFRGRYHVLGGALDPLSGIGPDQLRIRELLSRIGERVDDVDVTEVIIATDPNTEGEATATYLVRMLRDIPGLTVTRIASGLPMGGDLEFADELTLGRALAGRRVLA</sequence>
<organism>
    <name type="scientific">Mycobacterium tuberculosis (strain ATCC 25177 / H37Ra)</name>
    <dbReference type="NCBI Taxonomy" id="419947"/>
    <lineage>
        <taxon>Bacteria</taxon>
        <taxon>Bacillati</taxon>
        <taxon>Actinomycetota</taxon>
        <taxon>Actinomycetes</taxon>
        <taxon>Mycobacteriales</taxon>
        <taxon>Mycobacteriaceae</taxon>
        <taxon>Mycobacterium</taxon>
        <taxon>Mycobacterium tuberculosis complex</taxon>
    </lineage>
</organism>
<name>RECR_MYCTA</name>
<feature type="chain" id="PRO_0000322916" description="Recombination protein RecR">
    <location>
        <begin position="1"/>
        <end position="203"/>
    </location>
</feature>
<feature type="domain" description="Toprim" evidence="1">
    <location>
        <begin position="79"/>
        <end position="179"/>
    </location>
</feature>
<feature type="zinc finger region" description="C4-type" evidence="1">
    <location>
        <begin position="56"/>
        <end position="71"/>
    </location>
</feature>
<accession>A5U941</accession>
<reference key="1">
    <citation type="journal article" date="2008" name="PLoS ONE">
        <title>Genetic basis of virulence attenuation revealed by comparative genomic analysis of Mycobacterium tuberculosis strain H37Ra versus H37Rv.</title>
        <authorList>
            <person name="Zheng H."/>
            <person name="Lu L."/>
            <person name="Wang B."/>
            <person name="Pu S."/>
            <person name="Zhang X."/>
            <person name="Zhu G."/>
            <person name="Shi W."/>
            <person name="Zhang L."/>
            <person name="Wang H."/>
            <person name="Wang S."/>
            <person name="Zhao G."/>
            <person name="Zhang Y."/>
        </authorList>
    </citation>
    <scope>NUCLEOTIDE SEQUENCE [LARGE SCALE GENOMIC DNA]</scope>
    <source>
        <strain>ATCC 25177 / H37Ra</strain>
    </source>
</reference>
<keyword id="KW-0227">DNA damage</keyword>
<keyword id="KW-0233">DNA recombination</keyword>
<keyword id="KW-0234">DNA repair</keyword>
<keyword id="KW-0479">Metal-binding</keyword>
<keyword id="KW-1185">Reference proteome</keyword>
<keyword id="KW-0862">Zinc</keyword>
<keyword id="KW-0863">Zinc-finger</keyword>
<comment type="function">
    <text evidence="1">May play a role in DNA repair. It seems to be involved in an RecBC-independent recombinational process of DNA repair. It may act with RecF and RecO.</text>
</comment>
<comment type="similarity">
    <text evidence="1">Belongs to the RecR family.</text>
</comment>
<gene>
    <name evidence="1" type="primary">recR</name>
    <name type="ordered locus">MRA_3752</name>
</gene>
<proteinExistence type="inferred from homology"/>
<protein>
    <recommendedName>
        <fullName evidence="1">Recombination protein RecR</fullName>
    </recommendedName>
</protein>
<dbReference type="EMBL" id="CP000611">
    <property type="protein sequence ID" value="ABQ75541.1"/>
    <property type="molecule type" value="Genomic_DNA"/>
</dbReference>
<dbReference type="RefSeq" id="WP_003420407.1">
    <property type="nucleotide sequence ID" value="NZ_CP016972.1"/>
</dbReference>
<dbReference type="SMR" id="A5U941"/>
<dbReference type="GeneID" id="45427714"/>
<dbReference type="KEGG" id="mra:MRA_3752"/>
<dbReference type="eggNOG" id="COG0353">
    <property type="taxonomic scope" value="Bacteria"/>
</dbReference>
<dbReference type="HOGENOM" id="CLU_060739_1_0_11"/>
<dbReference type="Proteomes" id="UP000001988">
    <property type="component" value="Chromosome"/>
</dbReference>
<dbReference type="GO" id="GO:0003677">
    <property type="term" value="F:DNA binding"/>
    <property type="evidence" value="ECO:0007669"/>
    <property type="project" value="UniProtKB-UniRule"/>
</dbReference>
<dbReference type="GO" id="GO:0008270">
    <property type="term" value="F:zinc ion binding"/>
    <property type="evidence" value="ECO:0007669"/>
    <property type="project" value="UniProtKB-KW"/>
</dbReference>
<dbReference type="GO" id="GO:0006310">
    <property type="term" value="P:DNA recombination"/>
    <property type="evidence" value="ECO:0007669"/>
    <property type="project" value="UniProtKB-UniRule"/>
</dbReference>
<dbReference type="GO" id="GO:0006281">
    <property type="term" value="P:DNA repair"/>
    <property type="evidence" value="ECO:0007669"/>
    <property type="project" value="UniProtKB-UniRule"/>
</dbReference>
<dbReference type="CDD" id="cd01025">
    <property type="entry name" value="TOPRIM_recR"/>
    <property type="match status" value="1"/>
</dbReference>
<dbReference type="Gene3D" id="3.30.60.80">
    <property type="match status" value="1"/>
</dbReference>
<dbReference type="Gene3D" id="3.40.1360.10">
    <property type="match status" value="1"/>
</dbReference>
<dbReference type="Gene3D" id="6.10.250.240">
    <property type="match status" value="1"/>
</dbReference>
<dbReference type="Gene3D" id="1.10.8.420">
    <property type="entry name" value="RecR Domain 1"/>
    <property type="match status" value="1"/>
</dbReference>
<dbReference type="HAMAP" id="MF_00017">
    <property type="entry name" value="RecR"/>
    <property type="match status" value="1"/>
</dbReference>
<dbReference type="InterPro" id="IPR000093">
    <property type="entry name" value="DNA_Rcmb_RecR"/>
</dbReference>
<dbReference type="InterPro" id="IPR003583">
    <property type="entry name" value="Hlx-hairpin-Hlx_DNA-bd_motif"/>
</dbReference>
<dbReference type="InterPro" id="IPR023627">
    <property type="entry name" value="Rcmb_RecR"/>
</dbReference>
<dbReference type="InterPro" id="IPR015967">
    <property type="entry name" value="Rcmb_RecR_Znf"/>
</dbReference>
<dbReference type="InterPro" id="IPR006171">
    <property type="entry name" value="TOPRIM_dom"/>
</dbReference>
<dbReference type="InterPro" id="IPR034137">
    <property type="entry name" value="TOPRIM_RecR"/>
</dbReference>
<dbReference type="NCBIfam" id="TIGR00615">
    <property type="entry name" value="recR"/>
    <property type="match status" value="1"/>
</dbReference>
<dbReference type="PANTHER" id="PTHR30446">
    <property type="entry name" value="RECOMBINATION PROTEIN RECR"/>
    <property type="match status" value="1"/>
</dbReference>
<dbReference type="PANTHER" id="PTHR30446:SF0">
    <property type="entry name" value="RECOMBINATION PROTEIN RECR"/>
    <property type="match status" value="1"/>
</dbReference>
<dbReference type="Pfam" id="PF21175">
    <property type="entry name" value="RecR_C"/>
    <property type="match status" value="1"/>
</dbReference>
<dbReference type="Pfam" id="PF21176">
    <property type="entry name" value="RecR_HhH"/>
    <property type="match status" value="1"/>
</dbReference>
<dbReference type="Pfam" id="PF02132">
    <property type="entry name" value="RecR_ZnF"/>
    <property type="match status" value="1"/>
</dbReference>
<dbReference type="Pfam" id="PF13662">
    <property type="entry name" value="Toprim_4"/>
    <property type="match status" value="1"/>
</dbReference>
<dbReference type="SMART" id="SM00278">
    <property type="entry name" value="HhH1"/>
    <property type="match status" value="1"/>
</dbReference>
<dbReference type="SMART" id="SM00493">
    <property type="entry name" value="TOPRIM"/>
    <property type="match status" value="1"/>
</dbReference>
<dbReference type="SUPFAM" id="SSF111304">
    <property type="entry name" value="Recombination protein RecR"/>
    <property type="match status" value="1"/>
</dbReference>
<dbReference type="PROSITE" id="PS01300">
    <property type="entry name" value="RECR"/>
    <property type="match status" value="1"/>
</dbReference>
<dbReference type="PROSITE" id="PS50880">
    <property type="entry name" value="TOPRIM"/>
    <property type="match status" value="1"/>
</dbReference>